<gene>
    <name type="primary">Pde4a</name>
</gene>
<reference key="1">
    <citation type="journal article" date="1989" name="Proc. Natl. Acad. Sci. U.S.A.">
        <title>Cloning and characterization of mammalian homologs of the Drosophila dunce+ gene.</title>
        <authorList>
            <person name="Davis R.L."/>
            <person name="Takayasu H."/>
            <person name="Eberwine M."/>
            <person name="Myres J."/>
        </authorList>
    </citation>
    <scope>NUCLEOTIDE SEQUENCE [MRNA] (ISOFORMS 3; 4 AND 5)</scope>
</reference>
<reference key="2">
    <citation type="journal article" date="1994" name="Gene">
        <title>Differential CNS expression of alternative mRNA isoforms of the mammalian genes encoding cAMP-specific phosphodiesterases.</title>
        <authorList>
            <person name="Bolger G.B."/>
            <person name="Rodgers L."/>
            <person name="Riggs M."/>
        </authorList>
    </citation>
    <scope>NUCLEOTIDE SEQUENCE [MRNA] (ISOFORMS 1; 3; 4 AND 5)</scope>
    <source>
        <tissue>Brain</tissue>
    </source>
</reference>
<reference key="3">
    <citation type="journal article" date="1996" name="J. Biol. Chem.">
        <title>Alternative splicing of cAMP-specific phosphodiesterase mRNA transcripts. Characterization of a novel tissue-specific isoform, RNPDE4A8.</title>
        <authorList>
            <person name="Bolger G.B."/>
            <person name="McPhee I."/>
            <person name="Houslay M.D."/>
        </authorList>
    </citation>
    <scope>NUCLEOTIDE SEQUENCE [MRNA] (ISOFORM 2)</scope>
    <scope>FUNCTION (ISOFORM 2)</scope>
    <scope>CATALYTIC ACTIVITY (ISOFORM 2)</scope>
    <scope>BIOPHYSICOCHEMICAL PROPERTIES (ISOFORM 2)</scope>
    <scope>ACTIVITY REGULATION (ISOFORM 2)</scope>
    <scope>SUBCELLULAR LOCATION (ISOFORM 2)</scope>
    <scope>TISSUE SPECIFICITY (ISOFORM 2)</scope>
    <source>
        <strain>Sprague-Dawley</strain>
        <tissue>Testis</tissue>
    </source>
</reference>
<reference key="4">
    <citation type="journal article" date="1989" name="Proc. Natl. Acad. Sci. U.S.A.">
        <title>Molecular cloning of rat homologues of the Drosophila melanogaster dunce cAMP phosphodiesterase: evidence for a family of genes.</title>
        <authorList>
            <person name="Swinnen J.V."/>
            <person name="Joseph D.R."/>
            <person name="Conti M."/>
        </authorList>
    </citation>
    <scope>NUCLEOTIDE SEQUENCE [MRNA] OF 319-677 (ISOFORMS 3/4)</scope>
    <source>
        <tissue>Testis</tissue>
    </source>
</reference>
<reference key="5">
    <citation type="journal article" date="2001" name="Mol. Pharmacol.">
        <title>Molecular cloning, genomic positioning, promoter identification, and characterization of the novel cyclic AMP-specific phosphodiesterase PDE4A10.</title>
        <authorList>
            <person name="Rena G."/>
            <person name="Begg F."/>
            <person name="Ross A."/>
            <person name="MacKenzie C."/>
            <person name="McPhee I."/>
            <person name="Campbell L."/>
            <person name="Huston E."/>
            <person name="Sullivan M."/>
            <person name="Houslay M.D."/>
        </authorList>
    </citation>
    <scope>PARTIAL NUCLEOTIDE SEQUENCE [MRNA] (ISOFORM 6)</scope>
</reference>
<reference key="6">
    <citation type="journal article" date="2011" name="Biochem. J.">
        <title>Phosphorylation of cAMP-specific PDE4A5 (phosphodiesterase-4A5) by MK2 (MAPKAPK2) attenuates its activation through protein kinase A phosphorylation.</title>
        <authorList>
            <person name="MacKenzie K.F."/>
            <person name="Wallace D.A."/>
            <person name="Hill E.V."/>
            <person name="Anthony D.F."/>
            <person name="Henderson D.J."/>
            <person name="Houslay D.M."/>
            <person name="Arthur J.S."/>
            <person name="Baillie G.S."/>
            <person name="Houslay M.D."/>
        </authorList>
    </citation>
    <scope>FUNCTION (ISOFORM 1)</scope>
    <scope>CATALYTIC ACTIVITY (ISOFORM 1)</scope>
    <scope>PATHWAY</scope>
    <scope>PHOSPHORYLATION AT SER-147 (ISOFORM 1)</scope>
    <scope>MUTAGENESIS OF SER-147 AND SER-161</scope>
</reference>
<reference key="7">
    <citation type="journal article" date="2012" name="Nat. Commun.">
        <title>Quantitative maps of protein phosphorylation sites across 14 different rat organs and tissues.</title>
        <authorList>
            <person name="Lundby A."/>
            <person name="Secher A."/>
            <person name="Lage K."/>
            <person name="Nordsborg N.B."/>
            <person name="Dmytriyev A."/>
            <person name="Lundby C."/>
            <person name="Olsen J.V."/>
        </authorList>
    </citation>
    <scope>PHOSPHORYLATION [LARGE SCALE ANALYSIS] AT SER-147; SER-152; SER-672 AND SER-674</scope>
    <scope>IDENTIFICATION BY MASS SPECTROMETRY [LARGE SCALE ANALYSIS]</scope>
</reference>
<reference key="8">
    <citation type="journal article" date="1996" name="J. Biol. Chem.">
        <title>Determination of the structure of the N-terminal splice region of the cyclic AMP-specific phosphodiesterase RD1 (RNPDE4A1) by 1H NMR and identification of the membrane association domain using chimeric constructs.</title>
        <authorList>
            <person name="Smith K.J."/>
            <person name="Scotland G."/>
            <person name="Beattie J."/>
            <person name="Trayer I.P."/>
            <person name="Houslay M.D."/>
        </authorList>
    </citation>
    <scope>STRUCTURE BY NMR OF 1-26 OF ISOFORM 3</scope>
</reference>
<feature type="chain" id="PRO_0000198808" description="3',5'-cyclic-AMP phosphodiesterase 4A">
    <location>
        <begin position="1"/>
        <end position="844"/>
    </location>
</feature>
<feature type="domain" description="PDEase" evidence="5">
    <location>
        <begin position="343"/>
        <end position="672"/>
    </location>
</feature>
<feature type="region of interest" description="Disordered" evidence="6">
    <location>
        <begin position="1"/>
        <end position="124"/>
    </location>
</feature>
<feature type="region of interest" description="Disordered" evidence="6">
    <location>
        <begin position="296"/>
        <end position="317"/>
    </location>
</feature>
<feature type="region of interest" description="Disordered" evidence="6">
    <location>
        <begin position="668"/>
        <end position="690"/>
    </location>
</feature>
<feature type="region of interest" description="Disordered" evidence="6">
    <location>
        <begin position="818"/>
        <end position="844"/>
    </location>
</feature>
<feature type="compositionally biased region" description="Low complexity" evidence="6">
    <location>
        <begin position="36"/>
        <end position="46"/>
    </location>
</feature>
<feature type="compositionally biased region" description="Basic and acidic residues" evidence="6">
    <location>
        <begin position="51"/>
        <end position="78"/>
    </location>
</feature>
<feature type="compositionally biased region" description="Polar residues" evidence="6">
    <location>
        <begin position="82"/>
        <end position="91"/>
    </location>
</feature>
<feature type="compositionally biased region" description="Polar residues" evidence="6">
    <location>
        <begin position="820"/>
        <end position="830"/>
    </location>
</feature>
<feature type="active site" description="Proton donor" evidence="3">
    <location>
        <position position="419"/>
    </location>
</feature>
<feature type="binding site" evidence="4">
    <location>
        <position position="419"/>
    </location>
    <ligand>
        <name>3',5'-cyclic AMP</name>
        <dbReference type="ChEBI" id="CHEBI:58165"/>
    </ligand>
</feature>
<feature type="binding site" evidence="3">
    <location>
        <position position="419"/>
    </location>
    <ligand>
        <name>AMP</name>
        <dbReference type="ChEBI" id="CHEBI:456215"/>
    </ligand>
</feature>
<feature type="binding site" evidence="3">
    <location>
        <position position="423"/>
    </location>
    <ligand>
        <name>AMP</name>
        <dbReference type="ChEBI" id="CHEBI:456215"/>
    </ligand>
</feature>
<feature type="binding site" evidence="2">
    <location>
        <position position="423"/>
    </location>
    <ligand>
        <name>Zn(2+)</name>
        <dbReference type="ChEBI" id="CHEBI:29105"/>
        <label>1</label>
    </ligand>
</feature>
<feature type="binding site" evidence="2">
    <location>
        <position position="459"/>
    </location>
    <ligand>
        <name>Zn(2+)</name>
        <dbReference type="ChEBI" id="CHEBI:29105"/>
        <label>1</label>
    </ligand>
</feature>
<feature type="binding site" evidence="3">
    <location>
        <position position="460"/>
    </location>
    <ligand>
        <name>AMP</name>
        <dbReference type="ChEBI" id="CHEBI:456215"/>
    </ligand>
</feature>
<feature type="binding site" evidence="2">
    <location>
        <position position="460"/>
    </location>
    <ligand>
        <name>Mg(2+)</name>
        <dbReference type="ChEBI" id="CHEBI:18420"/>
    </ligand>
</feature>
<feature type="binding site" evidence="3">
    <location>
        <position position="460"/>
    </location>
    <ligand>
        <name>Mn(2+)</name>
        <dbReference type="ChEBI" id="CHEBI:29035"/>
    </ligand>
</feature>
<feature type="binding site" evidence="2">
    <location>
        <position position="460"/>
    </location>
    <ligand>
        <name>Zn(2+)</name>
        <dbReference type="ChEBI" id="CHEBI:29105"/>
        <label>1</label>
    </ligand>
</feature>
<feature type="binding site" evidence="3">
    <location>
        <position position="460"/>
    </location>
    <ligand>
        <name>Zn(2+)</name>
        <dbReference type="ChEBI" id="CHEBI:29105"/>
        <label>2</label>
    </ligand>
</feature>
<feature type="binding site" evidence="3">
    <location>
        <position position="577"/>
    </location>
    <ligand>
        <name>AMP</name>
        <dbReference type="ChEBI" id="CHEBI:456215"/>
    </ligand>
</feature>
<feature type="binding site" evidence="2">
    <location>
        <position position="577"/>
    </location>
    <ligand>
        <name>Zn(2+)</name>
        <dbReference type="ChEBI" id="CHEBI:29105"/>
        <label>1</label>
    </ligand>
</feature>
<feature type="binding site" evidence="4">
    <location>
        <position position="628"/>
    </location>
    <ligand>
        <name>3',5'-cyclic AMP</name>
        <dbReference type="ChEBI" id="CHEBI:58165"/>
    </ligand>
</feature>
<feature type="binding site" evidence="3">
    <location>
        <position position="628"/>
    </location>
    <ligand>
        <name>AMP</name>
        <dbReference type="ChEBI" id="CHEBI:456215"/>
    </ligand>
</feature>
<feature type="binding site" evidence="4">
    <location>
        <position position="631"/>
    </location>
    <ligand>
        <name>3',5'-cyclic AMP</name>
        <dbReference type="ChEBI" id="CHEBI:58165"/>
    </ligand>
</feature>
<feature type="binding site" evidence="3">
    <location>
        <position position="631"/>
    </location>
    <ligand>
        <name>AMP</name>
        <dbReference type="ChEBI" id="CHEBI:456215"/>
    </ligand>
</feature>
<feature type="site" description="Cleavage; by caspase-3" evidence="2">
    <location>
        <begin position="69"/>
        <end position="70"/>
    </location>
</feature>
<feature type="modified residue" description="Phosphoserine" evidence="2">
    <location>
        <position position="13"/>
    </location>
</feature>
<feature type="modified residue" description="Phosphoserine; by MAPKAPK2" evidence="7 16">
    <location>
        <position position="147"/>
    </location>
</feature>
<feature type="modified residue" description="Phosphoserine" evidence="16">
    <location>
        <position position="152"/>
    </location>
</feature>
<feature type="modified residue" description="Phosphoserine" evidence="2">
    <location>
        <position position="160"/>
    </location>
</feature>
<feature type="modified residue" description="Phosphoserine" evidence="2">
    <location>
        <position position="204"/>
    </location>
</feature>
<feature type="modified residue" description="Phosphoserine" evidence="2">
    <location>
        <position position="333"/>
    </location>
</feature>
<feature type="modified residue" description="Phosphoserine" evidence="16">
    <location>
        <position position="672"/>
    </location>
</feature>
<feature type="modified residue" description="Phosphoserine" evidence="16">
    <location>
        <position position="674"/>
    </location>
</feature>
<feature type="cross-link" description="Glycyl lysine isopeptide (Lys-Gly) (interchain with G-Cter in SUMO)" evidence="1">
    <location>
        <position position="344"/>
    </location>
</feature>
<feature type="splice variant" id="VSP_004569" description="In isoform 5." evidence="10 11">
    <location>
        <begin position="1"/>
        <end position="318"/>
    </location>
</feature>
<feature type="splice variant" id="VSP_004568" description="In isoform 4." evidence="10 11">
    <location>
        <begin position="1"/>
        <end position="259"/>
    </location>
</feature>
<feature type="splice variant" id="VSP_004566" description="In isoform 3." evidence="10 11">
    <location>
        <begin position="1"/>
        <end position="234"/>
    </location>
</feature>
<feature type="splice variant" id="VSP_004565" description="In isoform 2." evidence="12">
    <original>MEPPAAPSERSLSLSLPGPREGQATLKPPPQHLWRQPRTPIRIQQRGYPDSAERSETERSPHRPIERADAVDTGDRPGLRTTRMSWPSSFHGTGTGGGSSRR</original>
    <variation>MPSRKRLTLPRIFIVRKNGNS</variation>
    <location>
        <begin position="1"/>
        <end position="102"/>
    </location>
</feature>
<feature type="splice variant" id="VSP_038187" description="In isoform 6." evidence="13">
    <original>MEPPAAPSERSLSLSLPGPREGQATLKPPPQHLWRQPRTPIRIQQRGYPDSAERSETERSPHRPIERADAVDTGDRPGLRTTRMSWPSSFHGTGTGGGSSRR</original>
    <variation>ALPLGPESLTHFSFSEEDTLRHPPGRCVS</variation>
    <location>
        <begin position="1"/>
        <end position="102"/>
    </location>
</feature>
<feature type="splice variant" id="VSP_004567" description="In isoform 3." evidence="10 11">
    <original>WCLEQLETMQTYRSVSEMASHK</original>
    <variation>MPLVDFFCETCSKPWLVGWWDQ</variation>
    <location>
        <begin position="235"/>
        <end position="256"/>
    </location>
</feature>
<feature type="splice variant" id="VSP_004570" description="In isoform 5." evidence="10 11">
    <location>
        <begin position="354"/>
        <end position="386"/>
    </location>
</feature>
<feature type="mutagenesis site" description="Abolishes phosphorylation by MAPKAPK2." evidence="7">
    <original>S</original>
    <variation>A</variation>
    <location>
        <position position="147"/>
    </location>
</feature>
<feature type="mutagenesis site" description="Does not affect phosphorylation by MAPKAPK2." evidence="7">
    <original>S</original>
    <variation>A</variation>
    <location>
        <position position="161"/>
    </location>
</feature>
<feature type="sequence conflict" description="In Ref. 5; AAF14352." evidence="13" ref="5">
    <original>A</original>
    <variation>R</variation>
    <location>
        <position position="130"/>
    </location>
</feature>
<feature type="sequence conflict" description="In Ref. 4; AAA41848/AAA41823." evidence="13" ref="4">
    <original>GV</original>
    <variation>AL</variation>
    <location>
        <begin position="465"/>
        <end position="466"/>
    </location>
</feature>
<feature type="sequence conflict" description="In Ref. 4; AAA41848/AAA41823." evidence="13" ref="4">
    <original>GD</original>
    <variation>AH</variation>
    <location>
        <begin position="603"/>
        <end position="604"/>
    </location>
</feature>
<feature type="sequence conflict" description="In Ref. 1; AAC37699/AAA41101/AAA41102 and 5; AAF14352." evidence="13" ref="1 5">
    <original>A</original>
    <variation>T</variation>
    <location>
        <position position="833"/>
    </location>
</feature>
<feature type="helix" evidence="17">
    <location>
        <begin position="3"/>
        <end position="9"/>
    </location>
</feature>
<feature type="helix" evidence="17">
    <location>
        <begin position="16"/>
        <end position="19"/>
    </location>
</feature>
<feature type="helix" evidence="17">
    <location>
        <begin position="20"/>
        <end position="23"/>
    </location>
</feature>
<comment type="function">
    <text evidence="7 8">Hydrolyzes the second messenger 3',5'-cyclic AMP (cAMP), which is a key regulator of many important physiological processes.</text>
</comment>
<comment type="function">
    <molecule>Isoform 1</molecule>
    <text evidence="7">Efficiently hydrolyzes cAMP.</text>
</comment>
<comment type="function">
    <molecule>Isoform 2</molecule>
    <text evidence="8">Efficiently hydrolyzes cAMP.</text>
</comment>
<comment type="catalytic activity">
    <molecule>Isoform 1</molecule>
    <reaction evidence="7">
        <text>3',5'-cyclic AMP + H2O = AMP + H(+)</text>
        <dbReference type="Rhea" id="RHEA:25277"/>
        <dbReference type="ChEBI" id="CHEBI:15377"/>
        <dbReference type="ChEBI" id="CHEBI:15378"/>
        <dbReference type="ChEBI" id="CHEBI:58165"/>
        <dbReference type="ChEBI" id="CHEBI:456215"/>
        <dbReference type="EC" id="3.1.4.53"/>
    </reaction>
    <physiologicalReaction direction="left-to-right" evidence="14">
        <dbReference type="Rhea" id="RHEA:25278"/>
    </physiologicalReaction>
</comment>
<comment type="catalytic activity">
    <molecule>Isoform 2</molecule>
    <reaction evidence="8">
        <text>3',5'-cyclic AMP + H2O = AMP + H(+)</text>
        <dbReference type="Rhea" id="RHEA:25277"/>
        <dbReference type="ChEBI" id="CHEBI:15377"/>
        <dbReference type="ChEBI" id="CHEBI:15378"/>
        <dbReference type="ChEBI" id="CHEBI:58165"/>
        <dbReference type="ChEBI" id="CHEBI:456215"/>
        <dbReference type="EC" id="3.1.4.53"/>
    </reaction>
    <physiologicalReaction direction="left-to-right" evidence="15">
        <dbReference type="Rhea" id="RHEA:25278"/>
    </physiologicalReaction>
</comment>
<comment type="cofactor">
    <cofactor evidence="2">
        <name>Zn(2+)</name>
        <dbReference type="ChEBI" id="CHEBI:29105"/>
    </cofactor>
    <text evidence="2">Binds 2 divalent metal cations per subunit. Site 1 may preferentially bind zinc ions.</text>
</comment>
<comment type="cofactor">
    <cofactor evidence="2">
        <name>Mg(2+)</name>
        <dbReference type="ChEBI" id="CHEBI:18420"/>
    </cofactor>
    <cofactor evidence="3">
        <name>Mn(2+)</name>
        <dbReference type="ChEBI" id="CHEBI:29035"/>
    </cofactor>
    <text evidence="2 3">Binds 2 divalent metal cations per subunit (By similarity). Site 2 has a preference for magnesium and/or manganese ions (By similarity).</text>
</comment>
<comment type="activity regulation">
    <molecule>Isoform 2</molecule>
    <text evidence="8">Inhibited by rolipram.</text>
</comment>
<comment type="biophysicochemical properties">
    <molecule>Isoform 2</molecule>
    <kinetics>
        <KM evidence="8">5.4 uM for cAMP</KM>
    </kinetics>
</comment>
<comment type="pathway">
    <text evidence="14">Purine metabolism; 3',5'-cyclic AMP degradation; AMP from 3',5'-cyclic AMP: step 1/1.</text>
</comment>
<comment type="subunit">
    <text evidence="2">Interacts with LYN (via SH3 domain). Interacts with ARRB2.</text>
</comment>
<comment type="subcellular location">
    <molecule>Isoform 2</molecule>
    <subcellularLocation>
        <location evidence="8">Cytoplasm</location>
        <location evidence="8">Cytosol</location>
    </subcellularLocation>
    <subcellularLocation>
        <location>Membrane</location>
        <topology evidence="8">Peripheral membrane protein</topology>
    </subcellularLocation>
</comment>
<comment type="alternative products">
    <event type="alternative splicing"/>
    <isoform>
        <id>P54748-1</id>
        <name>1</name>
        <name evidence="9">PDE4A5</name>
        <sequence type="displayed"/>
    </isoform>
    <isoform>
        <id>P54748-2</id>
        <name>2</name>
        <name>PDE4A8</name>
        <sequence type="described" ref="VSP_004565"/>
    </isoform>
    <isoform>
        <id>P54748-3</id>
        <name>3</name>
        <sequence type="described" ref="VSP_004566 VSP_004567"/>
    </isoform>
    <isoform>
        <id>P54748-4</id>
        <name>4</name>
        <name>Medium</name>
        <sequence type="described" ref="VSP_004568"/>
    </isoform>
    <isoform>
        <id>P54748-5</id>
        <name>5</name>
        <name>Short</name>
        <sequence type="described" ref="VSP_004569 VSP_004570"/>
    </isoform>
    <isoform>
        <id>P54748-6</id>
        <name>6</name>
        <name>PDE4A10</name>
        <sequence type="described" ref="VSP_038187"/>
    </isoform>
</comment>
<comment type="tissue specificity">
    <molecule>Isoform 2</molecule>
    <text evidence="8">Isoform 2 is testis specific.</text>
</comment>
<comment type="PTM">
    <molecule>Isoform 1</molecule>
    <text evidence="7">Phosphorylated by MAPKAPK2 at Ser-147; it counteracts PKA-induced activation of PDE4A and modulates intracellular cAMP levels. Likely involved in cellular desensitization to cAMP signaling.</text>
</comment>
<comment type="PTM">
    <text evidence="2">Proteolytically cleaved by CASP3.</text>
</comment>
<comment type="miscellaneous">
    <molecule>Isoform 6</molecule>
    <text evidence="13">Incomplete sequence.</text>
</comment>
<comment type="similarity">
    <text evidence="13">Belongs to the cyclic nucleotide phosphodiesterase family. PDE4 subfamily.</text>
</comment>
<organism>
    <name type="scientific">Rattus norvegicus</name>
    <name type="common">Rat</name>
    <dbReference type="NCBI Taxonomy" id="10116"/>
    <lineage>
        <taxon>Eukaryota</taxon>
        <taxon>Metazoa</taxon>
        <taxon>Chordata</taxon>
        <taxon>Craniata</taxon>
        <taxon>Vertebrata</taxon>
        <taxon>Euteleostomi</taxon>
        <taxon>Mammalia</taxon>
        <taxon>Eutheria</taxon>
        <taxon>Euarchontoglires</taxon>
        <taxon>Glires</taxon>
        <taxon>Rodentia</taxon>
        <taxon>Myomorpha</taxon>
        <taxon>Muroidea</taxon>
        <taxon>Muridae</taxon>
        <taxon>Murinae</taxon>
        <taxon>Rattus</taxon>
    </lineage>
</organism>
<protein>
    <recommendedName>
        <fullName evidence="13">3',5'-cyclic-AMP phosphodiesterase 4A</fullName>
        <ecNumber evidence="8">3.1.4.53</ecNumber>
    </recommendedName>
    <alternativeName>
        <fullName>DPDE2</fullName>
    </alternativeName>
    <alternativeName>
        <fullName evidence="13">cAMP-specific phosphodiesterase 4A</fullName>
    </alternativeName>
</protein>
<keyword id="KW-0002">3D-structure</keyword>
<keyword id="KW-0025">Alternative splicing</keyword>
<keyword id="KW-0114">cAMP</keyword>
<keyword id="KW-0963">Cytoplasm</keyword>
<keyword id="KW-0378">Hydrolase</keyword>
<keyword id="KW-1017">Isopeptide bond</keyword>
<keyword id="KW-0460">Magnesium</keyword>
<keyword id="KW-0464">Manganese</keyword>
<keyword id="KW-0472">Membrane</keyword>
<keyword id="KW-0479">Metal-binding</keyword>
<keyword id="KW-0597">Phosphoprotein</keyword>
<keyword id="KW-1185">Reference proteome</keyword>
<keyword id="KW-0832">Ubl conjugation</keyword>
<keyword id="KW-0862">Zinc</keyword>
<sequence length="844" mass="93439">MEPPAAPSERSLSLSLPGPREGQATLKPPPQHLWRQPRTPIRIQQRGYPDSAERSETERSPHRPIERADAVDTGDRPGLRTTRMSWPSSFHGTGTGGGSSRRLEAENGPTPSPGRSPLDSQASPGLVLHAGATTSQRRESFLYRSDSDYDMSPKAVSRSSSVASEAHAEDLIVTPFAQVLASLRSVRSNFSLLTNVPIPSNKRSPLGGPPSVCKATLSEETCQQLARETLEELDWCLEQLETMQTYRSVSEMASHKFKRMLNRELTHLSEMSRSGNQVSEYISNTFLDKQNEVEIPSPTPRQRAFQQPPPSVLRQSQPMSQITGLKKLVHTGSLNTNVPRFGVKTDQEDLLAQELENLSKWGLNIFCVSEYAGGRSLSCIMYTIFQERDLLKKFHIPVDTMMMYMLTLEDHYHADVAYHNSLHAADVLQSTHVLLATPALDAVFTDLEILAALFAAAIHDVDHPGVSNQFLINTNSELALMYNDESVLENHHLAVGFKLLQEENCDIFQNLSKRQRQSLRKMVIDMVLATDMSKHMTLLADLKTMVETKKVTSSGVLLLDNYSDRIQVLRNMVHCADLSNPTKPLELYRQWTDRIMAEFFQQGDRERERGMEISPMCDKHTASVEKSQVGFIDYIVHPLWETWADLVHPDAQDILDTLEDNRDWYHSAIRQSPSPPLEEEPGGLGHPSLPDKFQFELTLEEEEEEDSLEVPGLPTTEETFLAAEDARAQAVDWSKVKGPSTTVVEVAERLKQETASAYGAPQESMEAVGCSFSPGTPILPDVRTLSSSEEAPGLLGLPSTAAEVEAPRDHLAATRACSACSGTSGDNSAIISAPGRWGSGGDPA</sequence>
<accession>P54748</accession>
<accession>P14645</accession>
<accession>Q9EQR7</accession>
<evidence type="ECO:0000250" key="1"/>
<evidence type="ECO:0000250" key="2">
    <source>
        <dbReference type="UniProtKB" id="P27815"/>
    </source>
</evidence>
<evidence type="ECO:0000250" key="3">
    <source>
        <dbReference type="UniProtKB" id="Q07343"/>
    </source>
</evidence>
<evidence type="ECO:0000250" key="4">
    <source>
        <dbReference type="UniProtKB" id="Q08499"/>
    </source>
</evidence>
<evidence type="ECO:0000255" key="5">
    <source>
        <dbReference type="PROSITE-ProRule" id="PRU01192"/>
    </source>
</evidence>
<evidence type="ECO:0000256" key="6">
    <source>
        <dbReference type="SAM" id="MobiDB-lite"/>
    </source>
</evidence>
<evidence type="ECO:0000269" key="7">
    <source>
    </source>
</evidence>
<evidence type="ECO:0000269" key="8">
    <source>
    </source>
</evidence>
<evidence type="ECO:0000303" key="9">
    <source>
    </source>
</evidence>
<evidence type="ECO:0000303" key="10">
    <source>
    </source>
</evidence>
<evidence type="ECO:0000303" key="11">
    <source>
    </source>
</evidence>
<evidence type="ECO:0000303" key="12">
    <source>
    </source>
</evidence>
<evidence type="ECO:0000305" key="13"/>
<evidence type="ECO:0000305" key="14">
    <source>
    </source>
</evidence>
<evidence type="ECO:0000305" key="15">
    <source>
    </source>
</evidence>
<evidence type="ECO:0007744" key="16">
    <source>
    </source>
</evidence>
<evidence type="ECO:0007829" key="17">
    <source>
        <dbReference type="PDB" id="1LOI"/>
    </source>
</evidence>
<name>PDE4A_RAT</name>
<dbReference type="EC" id="3.1.4.53" evidence="8"/>
<dbReference type="EMBL" id="L27057">
    <property type="protein sequence ID" value="AAC27098.1"/>
    <property type="molecule type" value="mRNA"/>
</dbReference>
<dbReference type="EMBL" id="L36467">
    <property type="protein sequence ID" value="AAB00357.1"/>
    <property type="molecule type" value="mRNA"/>
</dbReference>
<dbReference type="EMBL" id="L27062">
    <property type="protein sequence ID" value="AAA56859.1"/>
    <property type="molecule type" value="mRNA"/>
</dbReference>
<dbReference type="EMBL" id="M25348">
    <property type="protein sequence ID" value="AAA41848.1"/>
    <property type="molecule type" value="mRNA"/>
</dbReference>
<dbReference type="EMBL" id="M28411">
    <property type="protein sequence ID" value="AAA41823.1"/>
    <property type="molecule type" value="mRNA"/>
</dbReference>
<dbReference type="EMBL" id="M26715">
    <property type="protein sequence ID" value="AAC37699.1"/>
    <property type="molecule type" value="mRNA"/>
</dbReference>
<dbReference type="EMBL" id="M26716">
    <property type="protein sequence ID" value="AAA41101.1"/>
    <property type="molecule type" value="mRNA"/>
</dbReference>
<dbReference type="EMBL" id="M26717">
    <property type="protein sequence ID" value="AAA41102.1"/>
    <property type="molecule type" value="mRNA"/>
</dbReference>
<dbReference type="EMBL" id="AF110461">
    <property type="protein sequence ID" value="AAF14352.2"/>
    <property type="molecule type" value="mRNA"/>
</dbReference>
<dbReference type="PIR" id="I53865">
    <property type="entry name" value="I53865"/>
</dbReference>
<dbReference type="PIR" id="I67946">
    <property type="entry name" value="I67946"/>
</dbReference>
<dbReference type="RefSeq" id="NP_037233.3">
    <property type="nucleotide sequence ID" value="NM_013101.3"/>
</dbReference>
<dbReference type="PDB" id="1LOI">
    <property type="method" value="NMR"/>
    <property type="chains" value="A=1-25"/>
</dbReference>
<dbReference type="PDBsum" id="1LOI"/>
<dbReference type="SMR" id="P54748"/>
<dbReference type="BioGRID" id="247667">
    <property type="interactions" value="4"/>
</dbReference>
<dbReference type="FunCoup" id="P54748">
    <property type="interactions" value="591"/>
</dbReference>
<dbReference type="IntAct" id="P54748">
    <property type="interactions" value="1"/>
</dbReference>
<dbReference type="STRING" id="10116.ENSRNOP00000057815"/>
<dbReference type="BindingDB" id="P54748"/>
<dbReference type="ChEMBL" id="CHEMBL4964"/>
<dbReference type="DrugCentral" id="P54748"/>
<dbReference type="GlyGen" id="P54748">
    <property type="glycosylation" value="2 sites"/>
</dbReference>
<dbReference type="iPTMnet" id="P54748"/>
<dbReference type="PhosphoSitePlus" id="P54748"/>
<dbReference type="PaxDb" id="10116-ENSRNOP00000057815"/>
<dbReference type="GeneID" id="25638"/>
<dbReference type="KEGG" id="rno:25638"/>
<dbReference type="UCSC" id="RGD:3279">
    <molecule id="P54748-1"/>
    <property type="organism name" value="rat"/>
</dbReference>
<dbReference type="AGR" id="RGD:3279"/>
<dbReference type="CTD" id="5141"/>
<dbReference type="RGD" id="3279">
    <property type="gene designation" value="Pde4a"/>
</dbReference>
<dbReference type="eggNOG" id="KOG3689">
    <property type="taxonomic scope" value="Eukaryota"/>
</dbReference>
<dbReference type="InParanoid" id="P54748"/>
<dbReference type="PhylomeDB" id="P54748"/>
<dbReference type="BRENDA" id="3.1.4.53">
    <property type="organism ID" value="5301"/>
</dbReference>
<dbReference type="Reactome" id="R-RNO-180024">
    <property type="pathway name" value="DARPP-32 events"/>
</dbReference>
<dbReference type="Reactome" id="R-RNO-418555">
    <property type="pathway name" value="G alpha (s) signalling events"/>
</dbReference>
<dbReference type="UniPathway" id="UPA00762">
    <property type="reaction ID" value="UER00747"/>
</dbReference>
<dbReference type="PRO" id="PR:P54748"/>
<dbReference type="Proteomes" id="UP000002494">
    <property type="component" value="Unplaced"/>
</dbReference>
<dbReference type="GO" id="GO:0005737">
    <property type="term" value="C:cytoplasm"/>
    <property type="evidence" value="ECO:0000266"/>
    <property type="project" value="RGD"/>
</dbReference>
<dbReference type="GO" id="GO:0005829">
    <property type="term" value="C:cytosol"/>
    <property type="evidence" value="ECO:0000314"/>
    <property type="project" value="UniProtKB"/>
</dbReference>
<dbReference type="GO" id="GO:0016020">
    <property type="term" value="C:membrane"/>
    <property type="evidence" value="ECO:0000266"/>
    <property type="project" value="RGD"/>
</dbReference>
<dbReference type="GO" id="GO:0048471">
    <property type="term" value="C:perinuclear region of cytoplasm"/>
    <property type="evidence" value="ECO:0000314"/>
    <property type="project" value="RGD"/>
</dbReference>
<dbReference type="GO" id="GO:0098685">
    <property type="term" value="C:Schaffer collateral - CA1 synapse"/>
    <property type="evidence" value="ECO:0000314"/>
    <property type="project" value="SynGO"/>
</dbReference>
<dbReference type="GO" id="GO:0004115">
    <property type="term" value="F:3',5'-cyclic-AMP phosphodiesterase activity"/>
    <property type="evidence" value="ECO:0000314"/>
    <property type="project" value="UniProtKB"/>
</dbReference>
<dbReference type="GO" id="GO:0047555">
    <property type="term" value="F:3',5'-cyclic-GMP phosphodiesterase activity"/>
    <property type="evidence" value="ECO:0000318"/>
    <property type="project" value="GO_Central"/>
</dbReference>
<dbReference type="GO" id="GO:0030552">
    <property type="term" value="F:cAMP binding"/>
    <property type="evidence" value="ECO:0000266"/>
    <property type="project" value="RGD"/>
</dbReference>
<dbReference type="GO" id="GO:0046872">
    <property type="term" value="F:metal ion binding"/>
    <property type="evidence" value="ECO:0007669"/>
    <property type="project" value="UniProtKB-KW"/>
</dbReference>
<dbReference type="GO" id="GO:0030911">
    <property type="term" value="F:TPR domain binding"/>
    <property type="evidence" value="ECO:0000353"/>
    <property type="project" value="RGD"/>
</dbReference>
<dbReference type="GO" id="GO:0006198">
    <property type="term" value="P:cAMP catabolic process"/>
    <property type="evidence" value="ECO:0000314"/>
    <property type="project" value="UniProtKB"/>
</dbReference>
<dbReference type="GO" id="GO:0019933">
    <property type="term" value="P:cAMP-mediated signaling"/>
    <property type="evidence" value="ECO:0000318"/>
    <property type="project" value="GO_Central"/>
</dbReference>
<dbReference type="GO" id="GO:0071466">
    <property type="term" value="P:cellular response to xenobiotic stimulus"/>
    <property type="evidence" value="ECO:0000266"/>
    <property type="project" value="RGD"/>
</dbReference>
<dbReference type="GO" id="GO:0050804">
    <property type="term" value="P:modulation of chemical synaptic transmission"/>
    <property type="evidence" value="ECO:0000314"/>
    <property type="project" value="SynGO"/>
</dbReference>
<dbReference type="GO" id="GO:0106070">
    <property type="term" value="P:regulation of adenylate cyclase-activating G protein-coupled receptor signaling pathway"/>
    <property type="evidence" value="ECO:0000266"/>
    <property type="project" value="RGD"/>
</dbReference>
<dbReference type="GO" id="GO:0141161">
    <property type="term" value="P:regulation of cAMP/PKA signal transduction"/>
    <property type="evidence" value="ECO:0000266"/>
    <property type="project" value="RGD"/>
</dbReference>
<dbReference type="GO" id="GO:0009410">
    <property type="term" value="P:response to xenobiotic stimulus"/>
    <property type="evidence" value="ECO:0000270"/>
    <property type="project" value="RGD"/>
</dbReference>
<dbReference type="GO" id="GO:0007608">
    <property type="term" value="P:sensory perception of smell"/>
    <property type="evidence" value="ECO:0000266"/>
    <property type="project" value="RGD"/>
</dbReference>
<dbReference type="CDD" id="cd00077">
    <property type="entry name" value="HDc"/>
    <property type="match status" value="1"/>
</dbReference>
<dbReference type="FunFam" id="1.10.1300.10:FF:000001">
    <property type="entry name" value="Phosphodiesterase"/>
    <property type="match status" value="1"/>
</dbReference>
<dbReference type="Gene3D" id="1.10.1300.10">
    <property type="entry name" value="3'5'-cyclic nucleotide phosphodiesterase, catalytic domain"/>
    <property type="match status" value="1"/>
</dbReference>
<dbReference type="InterPro" id="IPR003607">
    <property type="entry name" value="HD/PDEase_dom"/>
</dbReference>
<dbReference type="InterPro" id="IPR040844">
    <property type="entry name" value="PDE4_UCR"/>
</dbReference>
<dbReference type="InterPro" id="IPR023088">
    <property type="entry name" value="PDEase"/>
</dbReference>
<dbReference type="InterPro" id="IPR002073">
    <property type="entry name" value="PDEase_catalytic_dom"/>
</dbReference>
<dbReference type="InterPro" id="IPR036971">
    <property type="entry name" value="PDEase_catalytic_dom_sf"/>
</dbReference>
<dbReference type="InterPro" id="IPR023174">
    <property type="entry name" value="PDEase_CS"/>
</dbReference>
<dbReference type="PANTHER" id="PTHR11347">
    <property type="entry name" value="CYCLIC NUCLEOTIDE PHOSPHODIESTERASE"/>
    <property type="match status" value="1"/>
</dbReference>
<dbReference type="Pfam" id="PF18100">
    <property type="entry name" value="PDE4_UCR"/>
    <property type="match status" value="1"/>
</dbReference>
<dbReference type="Pfam" id="PF00233">
    <property type="entry name" value="PDEase_I"/>
    <property type="match status" value="1"/>
</dbReference>
<dbReference type="PRINTS" id="PR00387">
    <property type="entry name" value="PDIESTERASE1"/>
</dbReference>
<dbReference type="SMART" id="SM00471">
    <property type="entry name" value="HDc"/>
    <property type="match status" value="1"/>
</dbReference>
<dbReference type="SUPFAM" id="SSF109604">
    <property type="entry name" value="HD-domain/PDEase-like"/>
    <property type="match status" value="1"/>
</dbReference>
<dbReference type="PROSITE" id="PS00126">
    <property type="entry name" value="PDEASE_I_1"/>
    <property type="match status" value="1"/>
</dbReference>
<dbReference type="PROSITE" id="PS51845">
    <property type="entry name" value="PDEASE_I_2"/>
    <property type="match status" value="1"/>
</dbReference>
<proteinExistence type="evidence at protein level"/>